<reference key="1">
    <citation type="submission" date="2004-11" db="EMBL/GenBank/DDBJ databases">
        <authorList>
            <consortium name="The German cDNA consortium"/>
        </authorList>
    </citation>
    <scope>NUCLEOTIDE SEQUENCE [LARGE SCALE MRNA]</scope>
    <source>
        <tissue>Brain cortex</tissue>
    </source>
</reference>
<accession>Q5R4X8</accession>
<protein>
    <recommendedName>
        <fullName>PRA1 family protein 3</fullName>
    </recommendedName>
    <alternativeName>
        <fullName>ADP-ribosylation factor-like protein 6-interacting protein 5</fullName>
        <shortName>ARL-6-interacting protein 5</shortName>
        <shortName>Aip-5</shortName>
    </alternativeName>
</protein>
<dbReference type="EMBL" id="CR861111">
    <property type="protein sequence ID" value="CAH93188.1"/>
    <property type="molecule type" value="mRNA"/>
</dbReference>
<dbReference type="RefSeq" id="NP_001127640.1">
    <property type="nucleotide sequence ID" value="NM_001134168.1"/>
</dbReference>
<dbReference type="FunCoup" id="Q5R4X8">
    <property type="interactions" value="565"/>
</dbReference>
<dbReference type="STRING" id="9601.ENSPPYP00000015350"/>
<dbReference type="Ensembl" id="ENSPPYT00000015963.3">
    <property type="protein sequence ID" value="ENSPPYP00000015350.2"/>
    <property type="gene ID" value="ENSPPYG00000013728.3"/>
</dbReference>
<dbReference type="GeneID" id="100174720"/>
<dbReference type="KEGG" id="pon:100174720"/>
<dbReference type="CTD" id="10550"/>
<dbReference type="eggNOG" id="KOG4050">
    <property type="taxonomic scope" value="Eukaryota"/>
</dbReference>
<dbReference type="GeneTree" id="ENSGT00390000008631"/>
<dbReference type="HOGENOM" id="CLU_097683_0_0_1"/>
<dbReference type="InParanoid" id="Q5R4X8"/>
<dbReference type="OMA" id="KPWDDFF"/>
<dbReference type="OrthoDB" id="18213at2759"/>
<dbReference type="TreeFam" id="TF105479"/>
<dbReference type="Proteomes" id="UP000001595">
    <property type="component" value="Chromosome 3"/>
</dbReference>
<dbReference type="GO" id="GO:0005856">
    <property type="term" value="C:cytoskeleton"/>
    <property type="evidence" value="ECO:0007669"/>
    <property type="project" value="UniProtKB-SubCell"/>
</dbReference>
<dbReference type="GO" id="GO:0005789">
    <property type="term" value="C:endoplasmic reticulum membrane"/>
    <property type="evidence" value="ECO:0007669"/>
    <property type="project" value="UniProtKB-SubCell"/>
</dbReference>
<dbReference type="GO" id="GO:0005886">
    <property type="term" value="C:plasma membrane"/>
    <property type="evidence" value="ECO:0007669"/>
    <property type="project" value="UniProtKB-SubCell"/>
</dbReference>
<dbReference type="GO" id="GO:0099523">
    <property type="term" value="C:presynaptic cytosol"/>
    <property type="evidence" value="ECO:0007669"/>
    <property type="project" value="Ensembl"/>
</dbReference>
<dbReference type="GO" id="GO:0034599">
    <property type="term" value="P:cellular response to oxidative stress"/>
    <property type="evidence" value="ECO:0007669"/>
    <property type="project" value="Ensembl"/>
</dbReference>
<dbReference type="GO" id="GO:0006749">
    <property type="term" value="P:glutathione metabolic process"/>
    <property type="evidence" value="ECO:0007669"/>
    <property type="project" value="Ensembl"/>
</dbReference>
<dbReference type="GO" id="GO:0008631">
    <property type="term" value="P:intrinsic apoptotic signaling pathway in response to oxidative stress"/>
    <property type="evidence" value="ECO:0007669"/>
    <property type="project" value="Ensembl"/>
</dbReference>
<dbReference type="GO" id="GO:0098712">
    <property type="term" value="P:L-glutamate import across plasma membrane"/>
    <property type="evidence" value="ECO:0007669"/>
    <property type="project" value="Ensembl"/>
</dbReference>
<dbReference type="GO" id="GO:0007611">
    <property type="term" value="P:learning or memory"/>
    <property type="evidence" value="ECO:0007669"/>
    <property type="project" value="Ensembl"/>
</dbReference>
<dbReference type="GO" id="GO:0002037">
    <property type="term" value="P:negative regulation of L-glutamate import across plasma membrane"/>
    <property type="evidence" value="ECO:0000250"/>
    <property type="project" value="UniProtKB"/>
</dbReference>
<dbReference type="GO" id="GO:0010917">
    <property type="term" value="P:negative regulation of mitochondrial membrane potential"/>
    <property type="evidence" value="ECO:0007669"/>
    <property type="project" value="Ensembl"/>
</dbReference>
<dbReference type="GO" id="GO:0043065">
    <property type="term" value="P:positive regulation of apoptotic process"/>
    <property type="evidence" value="ECO:0007669"/>
    <property type="project" value="Ensembl"/>
</dbReference>
<dbReference type="GO" id="GO:0032874">
    <property type="term" value="P:positive regulation of stress-activated MAPK cascade"/>
    <property type="evidence" value="ECO:0007669"/>
    <property type="project" value="Ensembl"/>
</dbReference>
<dbReference type="GO" id="GO:0072659">
    <property type="term" value="P:protein localization to plasma membrane"/>
    <property type="evidence" value="ECO:0007669"/>
    <property type="project" value="Ensembl"/>
</dbReference>
<dbReference type="GO" id="GO:0015031">
    <property type="term" value="P:protein transport"/>
    <property type="evidence" value="ECO:0007669"/>
    <property type="project" value="Ensembl"/>
</dbReference>
<dbReference type="InterPro" id="IPR004895">
    <property type="entry name" value="Prenylated_rab_accept_PRA1"/>
</dbReference>
<dbReference type="PANTHER" id="PTHR12859:SF2">
    <property type="entry name" value="PRA1 FAMILY PROTEIN 3"/>
    <property type="match status" value="1"/>
</dbReference>
<dbReference type="PANTHER" id="PTHR12859">
    <property type="entry name" value="PRA1 PROTEIN"/>
    <property type="match status" value="1"/>
</dbReference>
<dbReference type="Pfam" id="PF03208">
    <property type="entry name" value="PRA1"/>
    <property type="match status" value="1"/>
</dbReference>
<sequence>MDVNIAPLRAWDDFFPGSDRFARPDFRDISKWNNRVVSNLLYYQTNYLVVAAMMISIVGFLSPFNMILGGIVVVLVFTGFVWAAHNKDVLRRMKKRYPTTFVMVVMLASYFLISMFGGVMVFVFGITFPLLLMFIHASLRLRNLKNKLENKMEGIGLKRTPMGIVLDALEQQEEGINRLTDYISKVKE</sequence>
<name>PRAF3_PONAB</name>
<feature type="chain" id="PRO_0000256850" description="PRA1 family protein 3">
    <location>
        <begin position="1"/>
        <end position="188"/>
    </location>
</feature>
<feature type="topological domain" description="Cytoplasmic" evidence="1">
    <location>
        <begin position="1"/>
        <end position="35"/>
    </location>
</feature>
<feature type="transmembrane region" description="Helical" evidence="5">
    <location>
        <begin position="36"/>
        <end position="56"/>
    </location>
</feature>
<feature type="transmembrane region" description="Helical" evidence="5">
    <location>
        <begin position="57"/>
        <end position="77"/>
    </location>
</feature>
<feature type="topological domain" description="Cytoplasmic" evidence="1">
    <location>
        <begin position="78"/>
        <end position="93"/>
    </location>
</feature>
<feature type="transmembrane region" description="Helical" evidence="5">
    <location>
        <begin position="94"/>
        <end position="114"/>
    </location>
</feature>
<feature type="transmembrane region" description="Helical" evidence="5">
    <location>
        <begin position="115"/>
        <end position="135"/>
    </location>
</feature>
<feature type="topological domain" description="Cytoplasmic" evidence="1">
    <location>
        <begin position="136"/>
        <end position="188"/>
    </location>
</feature>
<feature type="region of interest" description="Required for homodimer formation and heterodimer formation with ARL6IP1" evidence="3">
    <location>
        <begin position="103"/>
        <end position="117"/>
    </location>
</feature>
<feature type="region of interest" description="Targeting to endoplasmic reticulum membrane" evidence="4">
    <location>
        <begin position="136"/>
        <end position="188"/>
    </location>
</feature>
<feature type="modified residue" description="N-acetylmethionine" evidence="2">
    <location>
        <position position="1"/>
    </location>
</feature>
<gene>
    <name type="primary">ARL6IP5</name>
    <name type="synonym">PRAF3</name>
</gene>
<evidence type="ECO:0000250" key="1"/>
<evidence type="ECO:0000250" key="2">
    <source>
        <dbReference type="UniProtKB" id="O75915"/>
    </source>
</evidence>
<evidence type="ECO:0000250" key="3">
    <source>
        <dbReference type="UniProtKB" id="Q8R5J9"/>
    </source>
</evidence>
<evidence type="ECO:0000250" key="4">
    <source>
        <dbReference type="UniProtKB" id="Q9ES40"/>
    </source>
</evidence>
<evidence type="ECO:0000255" key="5"/>
<evidence type="ECO:0000305" key="6"/>
<comment type="function">
    <text evidence="3 4">Regulates intracellular concentrations of taurine and glutamate. Negatively modulates SLC1A1/EAAC1 glutamate transport activity by decreasing its affinity for glutamate in a PKC activity-dependent manner. Plays a role in the retention of SLC1A1/EAAC1 in the endoplasmic reticulum.</text>
</comment>
<comment type="subunit">
    <text evidence="3 4">Homodimer. Heterodimer with ARL6IP1. Forms multimers. Interacts with ARL6. Interacts with prenylated RAB1A and RAB3A. Interacts with SLC1A1/EAAC1. Interacts with RTN2 (via first transmembrane domain). Does not interact with VAMP1, VAMP2 or VAMP3.</text>
</comment>
<comment type="subcellular location">
    <subcellularLocation>
        <location evidence="4">Endoplasmic reticulum membrane</location>
        <topology evidence="5">Multi-pass membrane protein</topology>
    </subcellularLocation>
    <subcellularLocation>
        <location evidence="4">Cell membrane</location>
        <topology evidence="5">Multi-pass membrane protein</topology>
    </subcellularLocation>
    <subcellularLocation>
        <location evidence="4">Cytoplasm</location>
    </subcellularLocation>
    <subcellularLocation>
        <location evidence="4">Cytoplasm</location>
        <location evidence="4">Cytoskeleton</location>
    </subcellularLocation>
    <text evidence="4">Also exists as a soluble form in the cytoplasm. Associated with microtubules.</text>
</comment>
<comment type="similarity">
    <text evidence="6">Belongs to the PRA1 family.</text>
</comment>
<keyword id="KW-0007">Acetylation</keyword>
<keyword id="KW-1003">Cell membrane</keyword>
<keyword id="KW-0963">Cytoplasm</keyword>
<keyword id="KW-0206">Cytoskeleton</keyword>
<keyword id="KW-0256">Endoplasmic reticulum</keyword>
<keyword id="KW-0472">Membrane</keyword>
<keyword id="KW-1185">Reference proteome</keyword>
<keyword id="KW-0812">Transmembrane</keyword>
<keyword id="KW-1133">Transmembrane helix</keyword>
<organism>
    <name type="scientific">Pongo abelii</name>
    <name type="common">Sumatran orangutan</name>
    <name type="synonym">Pongo pygmaeus abelii</name>
    <dbReference type="NCBI Taxonomy" id="9601"/>
    <lineage>
        <taxon>Eukaryota</taxon>
        <taxon>Metazoa</taxon>
        <taxon>Chordata</taxon>
        <taxon>Craniata</taxon>
        <taxon>Vertebrata</taxon>
        <taxon>Euteleostomi</taxon>
        <taxon>Mammalia</taxon>
        <taxon>Eutheria</taxon>
        <taxon>Euarchontoglires</taxon>
        <taxon>Primates</taxon>
        <taxon>Haplorrhini</taxon>
        <taxon>Catarrhini</taxon>
        <taxon>Hominidae</taxon>
        <taxon>Pongo</taxon>
    </lineage>
</organism>
<proteinExistence type="evidence at transcript level"/>